<protein>
    <recommendedName>
        <fullName evidence="1">GMP reductase</fullName>
        <ecNumber evidence="1">1.7.1.7</ecNumber>
    </recommendedName>
    <alternativeName>
        <fullName evidence="1">Guanosine 5'-monophosphate oxidoreductase</fullName>
        <shortName evidence="1">Guanosine monophosphate reductase</shortName>
    </alternativeName>
</protein>
<name>GUAC_DELAS</name>
<evidence type="ECO:0000255" key="1">
    <source>
        <dbReference type="HAMAP-Rule" id="MF_01511"/>
    </source>
</evidence>
<feature type="chain" id="PRO_1000146134" description="GMP reductase">
    <location>
        <begin position="1"/>
        <end position="325"/>
    </location>
</feature>
<feature type="active site" description="Thioimidate intermediate" evidence="1">
    <location>
        <position position="173"/>
    </location>
</feature>
<feature type="binding site" evidence="1">
    <location>
        <begin position="202"/>
        <end position="225"/>
    </location>
    <ligand>
        <name>NADP(+)</name>
        <dbReference type="ChEBI" id="CHEBI:58349"/>
    </ligand>
</feature>
<keyword id="KW-0521">NADP</keyword>
<keyword id="KW-0560">Oxidoreductase</keyword>
<keyword id="KW-1185">Reference proteome</keyword>
<sequence>MEIFDYDNILLLPRKCRVESRSECDASVELGGRSFRIPAVPANMKTVVDESICTWLAQNGYFYVMHRFDLDNVQFVREMQGKGCFASISLGVKKPDYDTVDRFVAEGLCPEYITIDIAHGHADSVKNMIGYLKEKLPRSFVIAGNVGTPEAVIDLENWGADATKVGIGPGKVCITKLKTGFGTGGWQLSALKWCARVATKPIIADGGIRSHGDIAKSVRFGATMVMIGSLFAGHEESPGQTVEENGQRFKEYYGSASDFNKGEYKHVEGKRILEPVKGLLANTLIEMEQDVQSSISYSGGKKLMDIRKVNYVILGGDNAGEHLLM</sequence>
<organism>
    <name type="scientific">Delftia acidovorans (strain DSM 14801 / SPH-1)</name>
    <dbReference type="NCBI Taxonomy" id="398578"/>
    <lineage>
        <taxon>Bacteria</taxon>
        <taxon>Pseudomonadati</taxon>
        <taxon>Pseudomonadota</taxon>
        <taxon>Betaproteobacteria</taxon>
        <taxon>Burkholderiales</taxon>
        <taxon>Comamonadaceae</taxon>
        <taxon>Delftia</taxon>
    </lineage>
</organism>
<proteinExistence type="inferred from homology"/>
<dbReference type="EC" id="1.7.1.7" evidence="1"/>
<dbReference type="EMBL" id="CP000884">
    <property type="protein sequence ID" value="ABX37961.1"/>
    <property type="molecule type" value="Genomic_DNA"/>
</dbReference>
<dbReference type="RefSeq" id="WP_012207130.1">
    <property type="nucleotide sequence ID" value="NC_010002.1"/>
</dbReference>
<dbReference type="SMR" id="A9BNR6"/>
<dbReference type="STRING" id="398578.Daci_5332"/>
<dbReference type="GeneID" id="24119483"/>
<dbReference type="KEGG" id="dac:Daci_5332"/>
<dbReference type="eggNOG" id="COG0516">
    <property type="taxonomic scope" value="Bacteria"/>
</dbReference>
<dbReference type="HOGENOM" id="CLU_022552_5_0_4"/>
<dbReference type="Proteomes" id="UP000000784">
    <property type="component" value="Chromosome"/>
</dbReference>
<dbReference type="GO" id="GO:0005829">
    <property type="term" value="C:cytosol"/>
    <property type="evidence" value="ECO:0007669"/>
    <property type="project" value="TreeGrafter"/>
</dbReference>
<dbReference type="GO" id="GO:1902560">
    <property type="term" value="C:GMP reductase complex"/>
    <property type="evidence" value="ECO:0007669"/>
    <property type="project" value="InterPro"/>
</dbReference>
<dbReference type="GO" id="GO:0003920">
    <property type="term" value="F:GMP reductase activity"/>
    <property type="evidence" value="ECO:0007669"/>
    <property type="project" value="UniProtKB-UniRule"/>
</dbReference>
<dbReference type="GO" id="GO:0006163">
    <property type="term" value="P:purine nucleotide metabolic process"/>
    <property type="evidence" value="ECO:0007669"/>
    <property type="project" value="UniProtKB-UniRule"/>
</dbReference>
<dbReference type="CDD" id="cd00381">
    <property type="entry name" value="IMPDH"/>
    <property type="match status" value="1"/>
</dbReference>
<dbReference type="Gene3D" id="3.20.20.70">
    <property type="entry name" value="Aldolase class I"/>
    <property type="match status" value="1"/>
</dbReference>
<dbReference type="HAMAP" id="MF_01511">
    <property type="entry name" value="GMP_reduct_type2"/>
    <property type="match status" value="1"/>
</dbReference>
<dbReference type="InterPro" id="IPR013785">
    <property type="entry name" value="Aldolase_TIM"/>
</dbReference>
<dbReference type="InterPro" id="IPR050139">
    <property type="entry name" value="GMP_reductase"/>
</dbReference>
<dbReference type="InterPro" id="IPR005994">
    <property type="entry name" value="GuaC_type_2"/>
</dbReference>
<dbReference type="InterPro" id="IPR015875">
    <property type="entry name" value="IMP_DH/GMP_Rdtase_CS"/>
</dbReference>
<dbReference type="InterPro" id="IPR001093">
    <property type="entry name" value="IMP_DH_GMPRt"/>
</dbReference>
<dbReference type="NCBIfam" id="TIGR01306">
    <property type="entry name" value="GMP_reduct_2"/>
    <property type="match status" value="1"/>
</dbReference>
<dbReference type="NCBIfam" id="NF003966">
    <property type="entry name" value="PRK05458.1"/>
    <property type="match status" value="1"/>
</dbReference>
<dbReference type="PANTHER" id="PTHR43170">
    <property type="entry name" value="GMP REDUCTASE"/>
    <property type="match status" value="1"/>
</dbReference>
<dbReference type="PANTHER" id="PTHR43170:SF5">
    <property type="entry name" value="GMP REDUCTASE"/>
    <property type="match status" value="1"/>
</dbReference>
<dbReference type="Pfam" id="PF00478">
    <property type="entry name" value="IMPDH"/>
    <property type="match status" value="1"/>
</dbReference>
<dbReference type="PIRSF" id="PIRSF036500">
    <property type="entry name" value="GMP_red_Firmic"/>
    <property type="match status" value="1"/>
</dbReference>
<dbReference type="SMART" id="SM01240">
    <property type="entry name" value="IMPDH"/>
    <property type="match status" value="1"/>
</dbReference>
<dbReference type="SUPFAM" id="SSF51412">
    <property type="entry name" value="Inosine monophosphate dehydrogenase (IMPDH)"/>
    <property type="match status" value="1"/>
</dbReference>
<dbReference type="PROSITE" id="PS00487">
    <property type="entry name" value="IMP_DH_GMP_RED"/>
    <property type="match status" value="1"/>
</dbReference>
<gene>
    <name evidence="1" type="primary">guaC</name>
    <name type="ordered locus">Daci_5332</name>
</gene>
<comment type="function">
    <text evidence="1">Catalyzes the irreversible NADPH-dependent deamination of GMP to IMP. It functions in the conversion of nucleobase, nucleoside and nucleotide derivatives of G to A nucleotides, and in maintaining the intracellular balance of A and G nucleotides.</text>
</comment>
<comment type="catalytic activity">
    <reaction evidence="1">
        <text>IMP + NH4(+) + NADP(+) = GMP + NADPH + 2 H(+)</text>
        <dbReference type="Rhea" id="RHEA:17185"/>
        <dbReference type="ChEBI" id="CHEBI:15378"/>
        <dbReference type="ChEBI" id="CHEBI:28938"/>
        <dbReference type="ChEBI" id="CHEBI:57783"/>
        <dbReference type="ChEBI" id="CHEBI:58053"/>
        <dbReference type="ChEBI" id="CHEBI:58115"/>
        <dbReference type="ChEBI" id="CHEBI:58349"/>
        <dbReference type="EC" id="1.7.1.7"/>
    </reaction>
</comment>
<comment type="similarity">
    <text evidence="1">Belongs to the IMPDH/GMPR family. GuaC type 2 subfamily.</text>
</comment>
<reference key="1">
    <citation type="submission" date="2007-11" db="EMBL/GenBank/DDBJ databases">
        <title>Complete sequence of Delftia acidovorans DSM 14801 / SPH-1.</title>
        <authorList>
            <person name="Copeland A."/>
            <person name="Lucas S."/>
            <person name="Lapidus A."/>
            <person name="Barry K."/>
            <person name="Glavina del Rio T."/>
            <person name="Dalin E."/>
            <person name="Tice H."/>
            <person name="Pitluck S."/>
            <person name="Lowry S."/>
            <person name="Clum A."/>
            <person name="Schmutz J."/>
            <person name="Larimer F."/>
            <person name="Land M."/>
            <person name="Hauser L."/>
            <person name="Kyrpides N."/>
            <person name="Kim E."/>
            <person name="Schleheck D."/>
            <person name="Richardson P."/>
        </authorList>
    </citation>
    <scope>NUCLEOTIDE SEQUENCE [LARGE SCALE GENOMIC DNA]</scope>
    <source>
        <strain>DSM 14801 / SPH-1</strain>
    </source>
</reference>
<accession>A9BNR6</accession>